<evidence type="ECO:0000255" key="1">
    <source>
        <dbReference type="HAMAP-Rule" id="MF_00498"/>
    </source>
</evidence>
<sequence length="157" mass="17061">MEQKKTRVTIVGSVYAQPGTQFVYMGRADQCESCTIARVCHNLESGRRYEVVAIRAASHRCPVHHGGAVTVDVAEAPVEMRVSPDIARKNTTIVVKFPECDEACETFAACHPIGVVEGQKYIITDVLEGEAAPCRTGPSPVLVRVVPLPEGLPRYTP</sequence>
<gene>
    <name type="ordered locus">Mhun_1135</name>
</gene>
<feature type="chain" id="PRO_0000378132" description="UPF0179 protein Mhun_1135">
    <location>
        <begin position="1"/>
        <end position="157"/>
    </location>
</feature>
<comment type="similarity">
    <text evidence="1">Belongs to the UPF0179 family.</text>
</comment>
<name>Y1135_METHJ</name>
<keyword id="KW-1185">Reference proteome</keyword>
<accession>Q2FPC8</accession>
<protein>
    <recommendedName>
        <fullName evidence="1">UPF0179 protein Mhun_1135</fullName>
    </recommendedName>
</protein>
<organism>
    <name type="scientific">Methanospirillum hungatei JF-1 (strain ATCC 27890 / DSM 864 / NBRC 100397 / JF-1)</name>
    <dbReference type="NCBI Taxonomy" id="323259"/>
    <lineage>
        <taxon>Archaea</taxon>
        <taxon>Methanobacteriati</taxon>
        <taxon>Methanobacteriota</taxon>
        <taxon>Stenosarchaea group</taxon>
        <taxon>Methanomicrobia</taxon>
        <taxon>Methanomicrobiales</taxon>
        <taxon>Methanospirillaceae</taxon>
        <taxon>Methanospirillum</taxon>
    </lineage>
</organism>
<reference key="1">
    <citation type="journal article" date="2016" name="Stand. Genomic Sci.">
        <title>Complete genome sequence of Methanospirillum hungatei type strain JF1.</title>
        <authorList>
            <person name="Gunsalus R.P."/>
            <person name="Cook L.E."/>
            <person name="Crable B."/>
            <person name="Rohlin L."/>
            <person name="McDonald E."/>
            <person name="Mouttaki H."/>
            <person name="Sieber J.R."/>
            <person name="Poweleit N."/>
            <person name="Zhou H."/>
            <person name="Lapidus A.L."/>
            <person name="Daligault H.E."/>
            <person name="Land M."/>
            <person name="Gilna P."/>
            <person name="Ivanova N."/>
            <person name="Kyrpides N."/>
            <person name="Culley D.E."/>
            <person name="McInerney M.J."/>
        </authorList>
    </citation>
    <scope>NUCLEOTIDE SEQUENCE [LARGE SCALE GENOMIC DNA]</scope>
    <source>
        <strain>ATCC 27890 / DSM 864 / NBRC 100397 / JF-1</strain>
    </source>
</reference>
<proteinExistence type="inferred from homology"/>
<dbReference type="EMBL" id="CP000254">
    <property type="protein sequence ID" value="ABD40884.1"/>
    <property type="molecule type" value="Genomic_DNA"/>
</dbReference>
<dbReference type="RefSeq" id="WP_011448162.1">
    <property type="nucleotide sequence ID" value="NC_007796.1"/>
</dbReference>
<dbReference type="FunCoup" id="Q2FPC8">
    <property type="interactions" value="2"/>
</dbReference>
<dbReference type="STRING" id="323259.Mhun_1135"/>
<dbReference type="EnsemblBacteria" id="ABD40884">
    <property type="protein sequence ID" value="ABD40884"/>
    <property type="gene ID" value="Mhun_1135"/>
</dbReference>
<dbReference type="GeneID" id="3922513"/>
<dbReference type="KEGG" id="mhu:Mhun_1135"/>
<dbReference type="eggNOG" id="arCOG04477">
    <property type="taxonomic scope" value="Archaea"/>
</dbReference>
<dbReference type="HOGENOM" id="CLU_121764_0_0_2"/>
<dbReference type="InParanoid" id="Q2FPC8"/>
<dbReference type="OrthoDB" id="24613at2157"/>
<dbReference type="Proteomes" id="UP000001941">
    <property type="component" value="Chromosome"/>
</dbReference>
<dbReference type="HAMAP" id="MF_00498">
    <property type="entry name" value="UPF0179"/>
    <property type="match status" value="1"/>
</dbReference>
<dbReference type="InterPro" id="IPR005369">
    <property type="entry name" value="UPF0179"/>
</dbReference>
<dbReference type="PANTHER" id="PTHR40699">
    <property type="entry name" value="UPF0179 PROTEIN MJ1627"/>
    <property type="match status" value="1"/>
</dbReference>
<dbReference type="PANTHER" id="PTHR40699:SF1">
    <property type="entry name" value="UPF0179 PROTEIN MJ1627"/>
    <property type="match status" value="1"/>
</dbReference>
<dbReference type="Pfam" id="PF03684">
    <property type="entry name" value="UPF0179"/>
    <property type="match status" value="1"/>
</dbReference>